<organism>
    <name type="scientific">Acidianus two-tailed virus</name>
    <name type="common">ATV</name>
    <dbReference type="NCBI Taxonomy" id="315953"/>
    <lineage>
        <taxon>Viruses</taxon>
        <taxon>Viruses incertae sedis</taxon>
        <taxon>Bicaudaviridae</taxon>
        <taxon>Bicaudavirus</taxon>
    </lineage>
</organism>
<accession>Q3V4S6</accession>
<reference key="1">
    <citation type="journal article" date="2005" name="Nature">
        <title>Virology: independent virus development outside a host.</title>
        <authorList>
            <person name="Haring M."/>
            <person name="Vestergaard G."/>
            <person name="Rachel R."/>
            <person name="Chen L."/>
            <person name="Garrett R.A."/>
            <person name="Prangishvili D."/>
        </authorList>
    </citation>
    <scope>NUCLEOTIDE SEQUENCE [GENOMIC DNA]</scope>
</reference>
<organismHost>
    <name type="scientific">Acidianus convivator</name>
    <dbReference type="NCBI Taxonomy" id="269667"/>
</organismHost>
<feature type="chain" id="PRO_0000389047" description="Uncharacterized protein ORF98a">
    <location>
        <begin position="1"/>
        <end position="98"/>
    </location>
</feature>
<proteinExistence type="predicted"/>
<sequence length="98" mass="11699">MDYVSTKKIKWLDEITGTFTDEEYAKAVEFYKFLVSLSAQNKGILQIEWEKLIDLASSYMKVEPIEAFRIIKKMHAYGWIKMIDKRFIILNLERLRES</sequence>
<name>Y098A_ATV</name>
<protein>
    <recommendedName>
        <fullName>Uncharacterized protein ORF98a</fullName>
    </recommendedName>
</protein>
<keyword id="KW-1185">Reference proteome</keyword>
<dbReference type="EMBL" id="AJ888457">
    <property type="protein sequence ID" value="CAI59888.1"/>
    <property type="molecule type" value="Genomic_DNA"/>
</dbReference>
<dbReference type="RefSeq" id="YP_319850.1">
    <property type="nucleotide sequence ID" value="NC_007409.1"/>
</dbReference>
<dbReference type="SMR" id="Q3V4S6"/>
<dbReference type="GeneID" id="4484290"/>
<dbReference type="KEGG" id="vg:4484290"/>
<dbReference type="OrthoDB" id="24525at10239"/>
<dbReference type="Proteomes" id="UP000002150">
    <property type="component" value="Genome"/>
</dbReference>